<proteinExistence type="inferred from homology"/>
<protein>
    <recommendedName>
        <fullName evidence="1">ATP synthase subunit a</fullName>
    </recommendedName>
    <alternativeName>
        <fullName evidence="1">ATP synthase F0 sector subunit a</fullName>
    </alternativeName>
    <alternativeName>
        <fullName evidence="1">F-ATPase subunit 6</fullName>
    </alternativeName>
</protein>
<comment type="function">
    <text evidence="1">Key component of the proton channel; it plays a direct role in the translocation of protons across the membrane.</text>
</comment>
<comment type="subunit">
    <text evidence="1">F-type ATPases have 2 components, CF(1) - the catalytic core - and CF(0) - the membrane proton channel. CF(1) has five subunits: alpha(3), beta(3), gamma(1), delta(1), epsilon(1). CF(0) has three main subunits: a(1), b(2) and c(9-12). The alpha and beta chains form an alternating ring which encloses part of the gamma chain. CF(1) is attached to CF(0) by a central stalk formed by the gamma and epsilon chains, while a peripheral stalk is formed by the delta and b chains.</text>
</comment>
<comment type="subcellular location">
    <subcellularLocation>
        <location evidence="1">Cell membrane</location>
        <topology evidence="1">Multi-pass membrane protein</topology>
    </subcellularLocation>
</comment>
<comment type="similarity">
    <text evidence="1">Belongs to the ATPase A chain family.</text>
</comment>
<dbReference type="EMBL" id="CP000474">
    <property type="protein sequence ID" value="ABM09889.1"/>
    <property type="molecule type" value="Genomic_DNA"/>
</dbReference>
<dbReference type="RefSeq" id="WP_011775262.1">
    <property type="nucleotide sequence ID" value="NC_008711.1"/>
</dbReference>
<dbReference type="SMR" id="A1R7V8"/>
<dbReference type="STRING" id="290340.AAur_2600"/>
<dbReference type="GeneID" id="97301454"/>
<dbReference type="KEGG" id="aau:AAur_2600"/>
<dbReference type="eggNOG" id="COG0356">
    <property type="taxonomic scope" value="Bacteria"/>
</dbReference>
<dbReference type="HOGENOM" id="CLU_041018_0_1_11"/>
<dbReference type="OrthoDB" id="9809130at2"/>
<dbReference type="Proteomes" id="UP000000637">
    <property type="component" value="Chromosome"/>
</dbReference>
<dbReference type="GO" id="GO:0005886">
    <property type="term" value="C:plasma membrane"/>
    <property type="evidence" value="ECO:0007669"/>
    <property type="project" value="UniProtKB-SubCell"/>
</dbReference>
<dbReference type="GO" id="GO:0045259">
    <property type="term" value="C:proton-transporting ATP synthase complex"/>
    <property type="evidence" value="ECO:0007669"/>
    <property type="project" value="UniProtKB-KW"/>
</dbReference>
<dbReference type="GO" id="GO:0046933">
    <property type="term" value="F:proton-transporting ATP synthase activity, rotational mechanism"/>
    <property type="evidence" value="ECO:0007669"/>
    <property type="project" value="UniProtKB-UniRule"/>
</dbReference>
<dbReference type="CDD" id="cd00310">
    <property type="entry name" value="ATP-synt_Fo_a_6"/>
    <property type="match status" value="1"/>
</dbReference>
<dbReference type="Gene3D" id="1.20.120.220">
    <property type="entry name" value="ATP synthase, F0 complex, subunit A"/>
    <property type="match status" value="1"/>
</dbReference>
<dbReference type="HAMAP" id="MF_01393">
    <property type="entry name" value="ATP_synth_a_bact"/>
    <property type="match status" value="1"/>
</dbReference>
<dbReference type="InterPro" id="IPR000568">
    <property type="entry name" value="ATP_synth_F0_asu"/>
</dbReference>
<dbReference type="InterPro" id="IPR045083">
    <property type="entry name" value="ATP_synth_F0_asu_bact/mt"/>
</dbReference>
<dbReference type="InterPro" id="IPR035908">
    <property type="entry name" value="F0_ATP_A_sf"/>
</dbReference>
<dbReference type="NCBIfam" id="TIGR01131">
    <property type="entry name" value="ATP_synt_6_or_A"/>
    <property type="match status" value="1"/>
</dbReference>
<dbReference type="PANTHER" id="PTHR11410">
    <property type="entry name" value="ATP SYNTHASE SUBUNIT A"/>
    <property type="match status" value="1"/>
</dbReference>
<dbReference type="PANTHER" id="PTHR11410:SF0">
    <property type="entry name" value="ATP SYNTHASE SUBUNIT A"/>
    <property type="match status" value="1"/>
</dbReference>
<dbReference type="Pfam" id="PF00119">
    <property type="entry name" value="ATP-synt_A"/>
    <property type="match status" value="1"/>
</dbReference>
<dbReference type="PRINTS" id="PR00123">
    <property type="entry name" value="ATPASEA"/>
</dbReference>
<dbReference type="SUPFAM" id="SSF81336">
    <property type="entry name" value="F1F0 ATP synthase subunit A"/>
    <property type="match status" value="1"/>
</dbReference>
<gene>
    <name evidence="1" type="primary">atpB</name>
    <name type="ordered locus">AAur_2600</name>
</gene>
<evidence type="ECO:0000255" key="1">
    <source>
        <dbReference type="HAMAP-Rule" id="MF_01393"/>
    </source>
</evidence>
<keyword id="KW-0066">ATP synthesis</keyword>
<keyword id="KW-1003">Cell membrane</keyword>
<keyword id="KW-0138">CF(0)</keyword>
<keyword id="KW-0375">Hydrogen ion transport</keyword>
<keyword id="KW-0406">Ion transport</keyword>
<keyword id="KW-0472">Membrane</keyword>
<keyword id="KW-0812">Transmembrane</keyword>
<keyword id="KW-1133">Transmembrane helix</keyword>
<keyword id="KW-0813">Transport</keyword>
<sequence>MIALALPAQDSGSFTPPGIDEMHLPAILPWGAHDGFSKQMLLVILSVVIIATFFILAARKQQLVPGKLQFAGEMAYGFVRNGIAKDIIGGKDFIKYVPLLFSLFFFILVNNIYGAIPVIQLPSFSHVGGAYVMAGIVYFTWIIIGIKKNGLKYFKLATVPSGVPWYILPIVVPIEIISNFLVRPVTHSLRLFATMLAGHLIVMLAGSGIEFLVMQENVLLKGASVLVLVGAVAMYMLEALIMALQAYVFTLLTAIYIEGALHADSH</sequence>
<feature type="chain" id="PRO_0000362237" description="ATP synthase subunit a">
    <location>
        <begin position="1"/>
        <end position="266"/>
    </location>
</feature>
<feature type="transmembrane region" description="Helical" evidence="1">
    <location>
        <begin position="38"/>
        <end position="58"/>
    </location>
</feature>
<feature type="transmembrane region" description="Helical" evidence="1">
    <location>
        <begin position="99"/>
        <end position="119"/>
    </location>
</feature>
<feature type="transmembrane region" description="Helical" evidence="1">
    <location>
        <begin position="126"/>
        <end position="146"/>
    </location>
</feature>
<feature type="transmembrane region" description="Helical" evidence="1">
    <location>
        <begin position="162"/>
        <end position="182"/>
    </location>
</feature>
<feature type="transmembrane region" description="Helical" evidence="1">
    <location>
        <begin position="191"/>
        <end position="211"/>
    </location>
</feature>
<feature type="transmembrane region" description="Helical" evidence="1">
    <location>
        <begin position="224"/>
        <end position="244"/>
    </location>
</feature>
<accession>A1R7V8</accession>
<organism>
    <name type="scientific">Paenarthrobacter aurescens (strain TC1)</name>
    <dbReference type="NCBI Taxonomy" id="290340"/>
    <lineage>
        <taxon>Bacteria</taxon>
        <taxon>Bacillati</taxon>
        <taxon>Actinomycetota</taxon>
        <taxon>Actinomycetes</taxon>
        <taxon>Micrococcales</taxon>
        <taxon>Micrococcaceae</taxon>
        <taxon>Paenarthrobacter</taxon>
    </lineage>
</organism>
<reference key="1">
    <citation type="journal article" date="2006" name="PLoS Genet.">
        <title>Secrets of soil survival revealed by the genome sequence of Arthrobacter aurescens TC1.</title>
        <authorList>
            <person name="Mongodin E.F."/>
            <person name="Shapir N."/>
            <person name="Daugherty S.C."/>
            <person name="DeBoy R.T."/>
            <person name="Emerson J.B."/>
            <person name="Shvartzbeyn A."/>
            <person name="Radune D."/>
            <person name="Vamathevan J."/>
            <person name="Riggs F."/>
            <person name="Grinberg V."/>
            <person name="Khouri H.M."/>
            <person name="Wackett L.P."/>
            <person name="Nelson K.E."/>
            <person name="Sadowsky M.J."/>
        </authorList>
    </citation>
    <scope>NUCLEOTIDE SEQUENCE [LARGE SCALE GENOMIC DNA]</scope>
    <source>
        <strain>TC1</strain>
    </source>
</reference>
<name>ATP6_PAEAT</name>